<organism>
    <name type="scientific">Danio rerio</name>
    <name type="common">Zebrafish</name>
    <name type="synonym">Brachydanio rerio</name>
    <dbReference type="NCBI Taxonomy" id="7955"/>
    <lineage>
        <taxon>Eukaryota</taxon>
        <taxon>Metazoa</taxon>
        <taxon>Chordata</taxon>
        <taxon>Craniata</taxon>
        <taxon>Vertebrata</taxon>
        <taxon>Euteleostomi</taxon>
        <taxon>Actinopterygii</taxon>
        <taxon>Neopterygii</taxon>
        <taxon>Teleostei</taxon>
        <taxon>Ostariophysi</taxon>
        <taxon>Cypriniformes</taxon>
        <taxon>Danionidae</taxon>
        <taxon>Danioninae</taxon>
        <taxon>Danio</taxon>
    </lineage>
</organism>
<feature type="chain" id="PRO_0000226810" description="Xylosyl- and glucuronyltransferase LARGE1">
    <location>
        <begin position="1"/>
        <end position="757"/>
    </location>
</feature>
<feature type="topological domain" description="Cytoplasmic" evidence="3">
    <location>
        <begin position="1"/>
        <end position="10"/>
    </location>
</feature>
<feature type="transmembrane region" description="Helical; Signal-anchor for type II membrane protein" evidence="3">
    <location>
        <begin position="11"/>
        <end position="31"/>
    </location>
</feature>
<feature type="topological domain" description="Lumenal" evidence="3">
    <location>
        <begin position="32"/>
        <end position="757"/>
    </location>
</feature>
<feature type="region of interest" description="Disordered" evidence="4">
    <location>
        <begin position="76"/>
        <end position="127"/>
    </location>
</feature>
<feature type="region of interest" description="Xylosyltransferase activity" evidence="1">
    <location>
        <begin position="139"/>
        <end position="414"/>
    </location>
</feature>
<feature type="region of interest" description="Glucuronyltransferase activity" evidence="1">
    <location>
        <begin position="415"/>
        <end position="757"/>
    </location>
</feature>
<feature type="coiled-coil region" evidence="3">
    <location>
        <begin position="50"/>
        <end position="82"/>
    </location>
</feature>
<feature type="compositionally biased region" description="Low complexity" evidence="4">
    <location>
        <begin position="82"/>
        <end position="97"/>
    </location>
</feature>
<feature type="binding site" evidence="1">
    <location>
        <position position="243"/>
    </location>
    <ligand>
        <name>Mn(2+)</name>
        <dbReference type="ChEBI" id="CHEBI:29035"/>
        <label>1</label>
    </ligand>
</feature>
<feature type="binding site" evidence="1">
    <location>
        <position position="245"/>
    </location>
    <ligand>
        <name>Mn(2+)</name>
        <dbReference type="ChEBI" id="CHEBI:29035"/>
        <label>1</label>
    </ligand>
</feature>
<feature type="binding site" evidence="1">
    <location>
        <position position="564"/>
    </location>
    <ligand>
        <name>Mn(2+)</name>
        <dbReference type="ChEBI" id="CHEBI:29035"/>
        <label>2</label>
    </ligand>
</feature>
<feature type="binding site" evidence="1">
    <location>
        <position position="566"/>
    </location>
    <ligand>
        <name>Mn(2+)</name>
        <dbReference type="ChEBI" id="CHEBI:29035"/>
        <label>2</label>
    </ligand>
</feature>
<feature type="glycosylation site" description="N-linked (GlcNAc...) asparagine" evidence="3">
    <location>
        <position position="123"/>
    </location>
</feature>
<feature type="glycosylation site" description="N-linked (GlcNAc...) asparagine" evidence="3">
    <location>
        <position position="149"/>
    </location>
</feature>
<feature type="glycosylation site" description="N-linked (GlcNAc...) asparagine" evidence="3">
    <location>
        <position position="273"/>
    </location>
</feature>
<feature type="glycosylation site" description="N-linked (GlcNAc...) asparagine" evidence="3">
    <location>
        <position position="738"/>
    </location>
</feature>
<accession>Q66PG2</accession>
<name>LARG1_DANRE</name>
<evidence type="ECO:0000250" key="1">
    <source>
        <dbReference type="UniProtKB" id="O95461"/>
    </source>
</evidence>
<evidence type="ECO:0000250" key="2">
    <source>
        <dbReference type="UniProtKB" id="Q9Z1M7"/>
    </source>
</evidence>
<evidence type="ECO:0000255" key="3"/>
<evidence type="ECO:0000256" key="4">
    <source>
        <dbReference type="SAM" id="MobiDB-lite"/>
    </source>
</evidence>
<evidence type="ECO:0000305" key="5"/>
<reference key="1">
    <citation type="journal article" date="2005" name="Glycobiology">
        <title>Characterization of the LARGE family of putative glycosyltransferases associated with dystroglycanopathies.</title>
        <authorList>
            <person name="Grewal P.K."/>
            <person name="McLaughlan J.M."/>
            <person name="Moore C.J."/>
            <person name="Browning C.A."/>
            <person name="Hewitt J.E."/>
        </authorList>
    </citation>
    <scope>NUCLEOTIDE SEQUENCE [MRNA]</scope>
</reference>
<comment type="function">
    <text evidence="1 2">Bifunctional glycosyltransferase with both alpha-1,3-xylosyltransferase and beta-1,3-glucuronyltransferase activities involved in the maturation of alpha-dystroglycan (DAG1) by glycosylation leading to DAG1 binding to laminin G-like domain-containing extracellular proteins with high affinity. Elongates the glucuronyl-beta-1,4-xylose-beta disaccharide primer structure initiated by B4GAT1 by adding repeating units [-3-Xylose-alpha-1,3-GlcA-beta-1-] to produce a heteropolysaccharide. Requires the phosphorylation of core M3 (O-mannosyl trisaccharide) by POMK to elongate the glucuronyl-beta-1,4-xylose-beta disaccharide primer (By similarity). Plays a key role in skeletal muscle function and regeneration (By similarity).</text>
</comment>
<comment type="catalytic activity">
    <reaction evidence="1">
        <text>3-O-[beta-D-GlcA-(1-&gt;3)-beta-D-Xyl-(1-&gt;4)-Rib-ol-P-Rib-ol-P-3-beta-D-GalNAc-(1-&gt;3)-beta-D-GlcNAc-(1-&gt;4)-(O-6-P-alpha-D-Man)]-Thr-[protein] + UDP-alpha-D-xylose = 3-O-[alpha-D-Xyl-(1-&gt;3)-beta-D-GlcA-(1-&gt;4)-beta-D-Xyl-(1-&gt;4)-Rib-ol-P-Rib-ol-P-3-beta-D-GalNAc-(1-&gt;3)-beta-D-GlcNAc-(1-&gt;4)-(O-6-P-alpha-D-Man)]-Thr-[protein] + UDP + H(+)</text>
        <dbReference type="Rhea" id="RHEA:57336"/>
        <dbReference type="Rhea" id="RHEA-COMP:17482"/>
        <dbReference type="Rhea" id="RHEA-COMP:17483"/>
        <dbReference type="ChEBI" id="CHEBI:15378"/>
        <dbReference type="ChEBI" id="CHEBI:57632"/>
        <dbReference type="ChEBI" id="CHEBI:58223"/>
        <dbReference type="ChEBI" id="CHEBI:177336"/>
        <dbReference type="ChEBI" id="CHEBI:177352"/>
    </reaction>
    <physiologicalReaction direction="left-to-right" evidence="1">
        <dbReference type="Rhea" id="RHEA:57337"/>
    </physiologicalReaction>
</comment>
<comment type="catalytic activity">
    <reaction evidence="1">
        <text>3-O-{(1-&gt;[3)-alpha-D-Xyl-(1-&gt;3)-beta-D-GlcA-(1-&gt;](n)-4)-beta-D-Xyl-(1-&gt;4)-Rib-ol-P-Rib-ol-P-3-beta-D-GalNAc-(1-&gt;3)-beta-D-GlcNAc-(1-&gt;4)-O-6-P-alpha-D-Man}-L-Thr-[protein] + UDP-alpha-D-glucuronate = 3-O-{beta-D-GlcA-(1-&gt;[3)-alpha-D-Xyl-(1-&gt;3)-beta-D-GlcA-(1-&gt;](n)-4)-beta-D-Xyl-(1-&gt;4)-Rib-ol-P-Rib-ol-P-3-beta-D-GalNAc-(1-&gt;3)-beta-D-GlcNAc-(1-&gt;4)-O-6-P-alpha-D-Man}-L-Thr-[protein] + UDP + H(+)</text>
        <dbReference type="Rhea" id="RHEA:67924"/>
        <dbReference type="Rhea" id="RHEA-COMP:17484"/>
        <dbReference type="Rhea" id="RHEA-COMP:17486"/>
        <dbReference type="ChEBI" id="CHEBI:15378"/>
        <dbReference type="ChEBI" id="CHEBI:58052"/>
        <dbReference type="ChEBI" id="CHEBI:58223"/>
        <dbReference type="ChEBI" id="CHEBI:177354"/>
        <dbReference type="ChEBI" id="CHEBI:177355"/>
    </reaction>
    <physiologicalReaction direction="left-to-right" evidence="1">
        <dbReference type="Rhea" id="RHEA:67925"/>
    </physiologicalReaction>
</comment>
<comment type="catalytic activity">
    <reaction evidence="1">
        <text>3-O-{beta-D-GlcA-(1-&gt;[3)-alpha-D-Xyl-(1-&gt;3)-beta-D-GlcA-(1-&gt;](n)-4)-beta-D-Xyl-(1-&gt;4)-Rib-ol-P-Rib-ol-P-3-beta-D-GalNAc-(1-&gt;3)-beta-D-GlcNAc-(1-&gt;4)-O-6-P-alpha-D-Man}-L-Thr-[protein] + UDP-alpha-D-xylose = 3-O-{(1-&gt;[3)-alpha-D-Xyl-(1-&gt;3)-beta-D-GlcA-(1-&gt;](n+1)-4)-beta-D-Xyl-(1-&gt;4)-Rib-ol-P-Rib-ol-P-3-beta-D-GalNAc-(1-&gt;3)-beta-D-GlcNAc-(1-&gt;4)-O-6-P-alpha-D-Man}-L-Thr-[protein] + UDP + H(+)</text>
        <dbReference type="Rhea" id="RHEA:68368"/>
        <dbReference type="Rhea" id="RHEA-COMP:17485"/>
        <dbReference type="Rhea" id="RHEA-COMP:17486"/>
        <dbReference type="ChEBI" id="CHEBI:15378"/>
        <dbReference type="ChEBI" id="CHEBI:57632"/>
        <dbReference type="ChEBI" id="CHEBI:58223"/>
        <dbReference type="ChEBI" id="CHEBI:177354"/>
        <dbReference type="ChEBI" id="CHEBI:177355"/>
    </reaction>
    <physiologicalReaction direction="left-to-right" evidence="1">
        <dbReference type="Rhea" id="RHEA:68369"/>
    </physiologicalReaction>
</comment>
<comment type="cofactor">
    <cofactor evidence="1">
        <name>Mn(2+)</name>
        <dbReference type="ChEBI" id="CHEBI:29035"/>
    </cofactor>
    <text evidence="1">Binds 2 Mn(2+) ions per subunit. The xylosyltransferase part binds one Mn(2+) and the beta-1,3-glucuronyltransferase part binds one Mn(2+).</text>
</comment>
<comment type="pathway">
    <text evidence="1">Protein modification; protein glycosylation.</text>
</comment>
<comment type="subcellular location">
    <subcellularLocation>
        <location evidence="1">Golgi apparatus membrane</location>
        <topology evidence="1">Single-pass type II membrane protein</topology>
    </subcellularLocation>
</comment>
<comment type="similarity">
    <text evidence="5">In the C-terminal section; belongs to the glycosyltransferase 49 family.</text>
</comment>
<comment type="similarity">
    <text evidence="5">In the N-terminal section; belongs to the glycosyltransferase 8 family.</text>
</comment>
<proteinExistence type="evidence at transcript level"/>
<gene>
    <name evidence="1" type="primary">large1</name>
    <name type="synonym">large</name>
</gene>
<dbReference type="EC" id="2.4.-.-" evidence="1"/>
<dbReference type="EC" id="2.4.2.-" evidence="1"/>
<dbReference type="EC" id="2.4.1.-" evidence="1"/>
<dbReference type="EMBL" id="AY662338">
    <property type="protein sequence ID" value="AAU12251.1"/>
    <property type="molecule type" value="mRNA"/>
</dbReference>
<dbReference type="RefSeq" id="NP_001004537.1">
    <property type="nucleotide sequence ID" value="NM_001004537.1"/>
</dbReference>
<dbReference type="SMR" id="Q66PG2"/>
<dbReference type="FunCoup" id="Q66PG2">
    <property type="interactions" value="771"/>
</dbReference>
<dbReference type="STRING" id="7955.ENSDARP00000131670"/>
<dbReference type="CAZy" id="GT49">
    <property type="family name" value="Glycosyltransferase Family 49"/>
</dbReference>
<dbReference type="CAZy" id="GT8">
    <property type="family name" value="Glycosyltransferase Family 8"/>
</dbReference>
<dbReference type="GlyCosmos" id="Q66PG2">
    <property type="glycosylation" value="4 sites, No reported glycans"/>
</dbReference>
<dbReference type="PaxDb" id="7955-ENSDARP00000013130"/>
<dbReference type="GeneID" id="446213"/>
<dbReference type="KEGG" id="dre:446213"/>
<dbReference type="AGR" id="ZFIN:ZDB-GENE-061204-1"/>
<dbReference type="CTD" id="9215"/>
<dbReference type="ZFIN" id="ZDB-GENE-061204-1">
    <property type="gene designation" value="large1"/>
</dbReference>
<dbReference type="eggNOG" id="KOG3765">
    <property type="taxonomic scope" value="Eukaryota"/>
</dbReference>
<dbReference type="InParanoid" id="Q66PG2"/>
<dbReference type="OrthoDB" id="411524at2759"/>
<dbReference type="PhylomeDB" id="Q66PG2"/>
<dbReference type="Reactome" id="R-DRE-5173105">
    <property type="pathway name" value="O-linked glycosylation"/>
</dbReference>
<dbReference type="UniPathway" id="UPA00378"/>
<dbReference type="PRO" id="PR:Q66PG2"/>
<dbReference type="Proteomes" id="UP000000437">
    <property type="component" value="Chromosome 4"/>
</dbReference>
<dbReference type="GO" id="GO:0005794">
    <property type="term" value="C:Golgi apparatus"/>
    <property type="evidence" value="ECO:0000250"/>
    <property type="project" value="UniProtKB"/>
</dbReference>
<dbReference type="GO" id="GO:0000139">
    <property type="term" value="C:Golgi membrane"/>
    <property type="evidence" value="ECO:0007669"/>
    <property type="project" value="UniProtKB-SubCell"/>
</dbReference>
<dbReference type="GO" id="GO:0015020">
    <property type="term" value="F:glucuronosyltransferase activity"/>
    <property type="evidence" value="ECO:0000250"/>
    <property type="project" value="UniProtKB"/>
</dbReference>
<dbReference type="GO" id="GO:0016758">
    <property type="term" value="F:hexosyltransferase activity"/>
    <property type="evidence" value="ECO:0000250"/>
    <property type="project" value="UniProtKB"/>
</dbReference>
<dbReference type="GO" id="GO:0030145">
    <property type="term" value="F:manganese ion binding"/>
    <property type="evidence" value="ECO:0000250"/>
    <property type="project" value="UniProtKB"/>
</dbReference>
<dbReference type="GO" id="GO:0042285">
    <property type="term" value="F:xylosyltransferase activity"/>
    <property type="evidence" value="ECO:0000250"/>
    <property type="project" value="UniProtKB"/>
</dbReference>
<dbReference type="GO" id="GO:0006486">
    <property type="term" value="P:protein glycosylation"/>
    <property type="evidence" value="ECO:0000250"/>
    <property type="project" value="UniProtKB"/>
</dbReference>
<dbReference type="GO" id="GO:0035269">
    <property type="term" value="P:protein O-linked mannosylation"/>
    <property type="evidence" value="ECO:0000250"/>
    <property type="project" value="UniProtKB"/>
</dbReference>
<dbReference type="GO" id="GO:0060538">
    <property type="term" value="P:skeletal muscle organ development"/>
    <property type="evidence" value="ECO:0000250"/>
    <property type="project" value="UniProtKB"/>
</dbReference>
<dbReference type="GO" id="GO:0043403">
    <property type="term" value="P:skeletal muscle tissue regeneration"/>
    <property type="evidence" value="ECO:0000250"/>
    <property type="project" value="UniProtKB"/>
</dbReference>
<dbReference type="CDD" id="cd06431">
    <property type="entry name" value="GT8_LARGE_C"/>
    <property type="match status" value="1"/>
</dbReference>
<dbReference type="FunFam" id="3.90.550.10:FF:000229">
    <property type="entry name" value="Glycosyltransferase-like protein LARGE"/>
    <property type="match status" value="1"/>
</dbReference>
<dbReference type="FunFam" id="3.90.550.10:FF:000016">
    <property type="entry name" value="LARGE xylosyl- and glucuronyltransferase 2"/>
    <property type="match status" value="1"/>
</dbReference>
<dbReference type="Gene3D" id="3.90.550.10">
    <property type="entry name" value="Spore Coat Polysaccharide Biosynthesis Protein SpsA, Chain A"/>
    <property type="match status" value="1"/>
</dbReference>
<dbReference type="InterPro" id="IPR002495">
    <property type="entry name" value="Glyco_trans_8"/>
</dbReference>
<dbReference type="InterPro" id="IPR029044">
    <property type="entry name" value="Nucleotide-diphossugar_trans"/>
</dbReference>
<dbReference type="InterPro" id="IPR051292">
    <property type="entry name" value="Xyl/GlcA_transferase"/>
</dbReference>
<dbReference type="PANTHER" id="PTHR12270">
    <property type="entry name" value="GLYCOSYLTRANSFERASE-RELATED"/>
    <property type="match status" value="1"/>
</dbReference>
<dbReference type="PANTHER" id="PTHR12270:SF48">
    <property type="entry name" value="XYLOSYL- AND GLUCURONYLTRANSFERASE LARGE1"/>
    <property type="match status" value="1"/>
</dbReference>
<dbReference type="Pfam" id="PF13896">
    <property type="entry name" value="Glyco_transf_49"/>
    <property type="match status" value="1"/>
</dbReference>
<dbReference type="Pfam" id="PF01501">
    <property type="entry name" value="Glyco_transf_8"/>
    <property type="match status" value="1"/>
</dbReference>
<dbReference type="SUPFAM" id="SSF53448">
    <property type="entry name" value="Nucleotide-diphospho-sugar transferases"/>
    <property type="match status" value="1"/>
</dbReference>
<keyword id="KW-0175">Coiled coil</keyword>
<keyword id="KW-0325">Glycoprotein</keyword>
<keyword id="KW-0328">Glycosyltransferase</keyword>
<keyword id="KW-0333">Golgi apparatus</keyword>
<keyword id="KW-0464">Manganese</keyword>
<keyword id="KW-0472">Membrane</keyword>
<keyword id="KW-0479">Metal-binding</keyword>
<keyword id="KW-0511">Multifunctional enzyme</keyword>
<keyword id="KW-1185">Reference proteome</keyword>
<keyword id="KW-0735">Signal-anchor</keyword>
<keyword id="KW-0808">Transferase</keyword>
<keyword id="KW-0812">Transmembrane</keyword>
<keyword id="KW-1133">Transmembrane helix</keyword>
<protein>
    <recommendedName>
        <fullName evidence="5">Xylosyl- and glucuronyltransferase LARGE1</fullName>
        <ecNumber evidence="1">2.4.-.-</ecNumber>
    </recommendedName>
    <alternativeName>
        <fullName>Acetylglucosaminyltransferase-like 1A</fullName>
    </alternativeName>
    <alternativeName>
        <fullName>Glycosyltransferase-like protein</fullName>
    </alternativeName>
    <alternativeName>
        <fullName evidence="1">LARGE xylosyl- and glucuronyltransferase 1</fullName>
    </alternativeName>
    <domain>
        <recommendedName>
            <fullName evidence="5">Alpha-1,3-xylosyltransferase LARGE1</fullName>
            <ecNumber evidence="1">2.4.2.-</ecNumber>
        </recommendedName>
    </domain>
    <domain>
        <recommendedName>
            <fullName evidence="5">Beta-1,3-glucuronyltransferase LARGE1</fullName>
            <ecNumber evidence="1">2.4.1.-</ecNumber>
        </recommendedName>
    </domain>
</protein>
<sequence length="757" mass="87673">MLGMCRGRRKFVAASLALIFIPALTWLYLSSANITVKPLPLSPLDPQSSAVVGAAAEHQSLELRLRDVEEHNNALRREISRTPRVPTHSSHPSSSRHGNQLHTHSTEEGTGDSEAKKGAAAGNSSDCVPQPVVKKCETIHIAIVCAGYNASRDVVTLVKSVLFHRRNPLHFHIITDSIARKILADLFHTWMVPAVHVNFYDADELKSEVSWIPNKHYSGIHGLMKLVLTKTLPSDLEKVIVLDTDITFATDIAELWVVFHKFKGQQVLGLVENQSDWYLGNLWKNHRPWPALGRGFNTGVILLLLDRLRKLKWEQMWRLTAERELMSMLSTSLADQDIFNAVIKQNPFLVHQLPCYWNVQLSDHTRSEKCYKDVSDLKVIHWNSPKKLRVKNKHVEFFRNLYLTFLEYDGNLLRRELFGCPSETDHNSENLQKTLSELDEDDPCYEFRRERFTVHRTHVYFLHYEYEPTVDNTDVTLVAQLSMDRLQMLEAICKHWEGPISLALYLSDAEAQQFLRYAQGSEVLMSRSNVGYHIVYKEGQFYPVNLLRNVAMGQVNTPYMFLSDIDFLPMYGLYEYLRKSVVQLDMGNTKKALVVPAFETLRYRLSFPKSKAELLSQLDMGTLFTFRYHVWTKGHAPTDFAKWRTATTPYRVQWEADFEPYVMVRRESPEYDRRFVGFGWNKVAHIMELDAQEYEFVVLPNAYMIHMPHAPSFDITKFRSNKQYRACLKTLKEEFQQNMSRRYGFAALKYMTVDNNS</sequence>